<proteinExistence type="inferred from homology"/>
<reference key="1">
    <citation type="journal article" date="2008" name="PLoS ONE">
        <title>Genome sequence of the saprophyte Leptospira biflexa provides insights into the evolution of Leptospira and the pathogenesis of leptospirosis.</title>
        <authorList>
            <person name="Picardeau M."/>
            <person name="Bulach D.M."/>
            <person name="Bouchier C."/>
            <person name="Zuerner R.L."/>
            <person name="Zidane N."/>
            <person name="Wilson P.J."/>
            <person name="Creno S."/>
            <person name="Kuczek E.S."/>
            <person name="Bommezzadri S."/>
            <person name="Davis J.C."/>
            <person name="McGrath A."/>
            <person name="Johnson M.J."/>
            <person name="Boursaux-Eude C."/>
            <person name="Seemann T."/>
            <person name="Rouy Z."/>
            <person name="Coppel R.L."/>
            <person name="Rood J.I."/>
            <person name="Lajus A."/>
            <person name="Davies J.K."/>
            <person name="Medigue C."/>
            <person name="Adler B."/>
        </authorList>
    </citation>
    <scope>NUCLEOTIDE SEQUENCE [LARGE SCALE GENOMIC DNA]</scope>
    <source>
        <strain>Patoc 1 / Ames</strain>
    </source>
</reference>
<keyword id="KW-0012">Acyltransferase</keyword>
<keyword id="KW-0441">Lipid A biosynthesis</keyword>
<keyword id="KW-0444">Lipid biosynthesis</keyword>
<keyword id="KW-0443">Lipid metabolism</keyword>
<keyword id="KW-0677">Repeat</keyword>
<keyword id="KW-0808">Transferase</keyword>
<name>LPXD_LEPBA</name>
<feature type="chain" id="PRO_1000211748" description="UDP-3-O-acylglucosamine N-acyltransferase">
    <location>
        <begin position="1"/>
        <end position="352"/>
    </location>
</feature>
<feature type="active site" description="Proton acceptor" evidence="1">
    <location>
        <position position="244"/>
    </location>
</feature>
<organism>
    <name type="scientific">Leptospira biflexa serovar Patoc (strain Patoc 1 / Ames)</name>
    <dbReference type="NCBI Taxonomy" id="355278"/>
    <lineage>
        <taxon>Bacteria</taxon>
        <taxon>Pseudomonadati</taxon>
        <taxon>Spirochaetota</taxon>
        <taxon>Spirochaetia</taxon>
        <taxon>Leptospirales</taxon>
        <taxon>Leptospiraceae</taxon>
        <taxon>Leptospira</taxon>
    </lineage>
</organism>
<gene>
    <name evidence="1" type="primary">lpxD</name>
    <name type="ordered locus">LBF_0635</name>
</gene>
<dbReference type="EC" id="2.3.1.191" evidence="1"/>
<dbReference type="EMBL" id="CP000777">
    <property type="protein sequence ID" value="ABZ93167.1"/>
    <property type="molecule type" value="Genomic_DNA"/>
</dbReference>
<dbReference type="RefSeq" id="WP_012387677.1">
    <property type="nucleotide sequence ID" value="NC_010842.1"/>
</dbReference>
<dbReference type="SMR" id="B0SCK5"/>
<dbReference type="KEGG" id="lbf:LBF_0635"/>
<dbReference type="HOGENOM" id="CLU_049865_0_0_12"/>
<dbReference type="UniPathway" id="UPA00973"/>
<dbReference type="GO" id="GO:0016020">
    <property type="term" value="C:membrane"/>
    <property type="evidence" value="ECO:0007669"/>
    <property type="project" value="GOC"/>
</dbReference>
<dbReference type="GO" id="GO:0016410">
    <property type="term" value="F:N-acyltransferase activity"/>
    <property type="evidence" value="ECO:0007669"/>
    <property type="project" value="InterPro"/>
</dbReference>
<dbReference type="GO" id="GO:0009245">
    <property type="term" value="P:lipid A biosynthetic process"/>
    <property type="evidence" value="ECO:0007669"/>
    <property type="project" value="UniProtKB-UniRule"/>
</dbReference>
<dbReference type="CDD" id="cd03352">
    <property type="entry name" value="LbH_LpxD"/>
    <property type="match status" value="1"/>
</dbReference>
<dbReference type="Gene3D" id="2.160.10.10">
    <property type="entry name" value="Hexapeptide repeat proteins"/>
    <property type="match status" value="1"/>
</dbReference>
<dbReference type="Gene3D" id="3.40.1390.10">
    <property type="entry name" value="MurE/MurF, N-terminal domain"/>
    <property type="match status" value="1"/>
</dbReference>
<dbReference type="HAMAP" id="MF_00523">
    <property type="entry name" value="LpxD"/>
    <property type="match status" value="1"/>
</dbReference>
<dbReference type="InterPro" id="IPR001451">
    <property type="entry name" value="Hexapep"/>
</dbReference>
<dbReference type="InterPro" id="IPR007691">
    <property type="entry name" value="LpxD"/>
</dbReference>
<dbReference type="InterPro" id="IPR011004">
    <property type="entry name" value="Trimer_LpxA-like_sf"/>
</dbReference>
<dbReference type="InterPro" id="IPR020573">
    <property type="entry name" value="UDP_GlcNAc_AcTrfase_non-rep"/>
</dbReference>
<dbReference type="NCBIfam" id="TIGR01853">
    <property type="entry name" value="lipid_A_lpxD"/>
    <property type="match status" value="1"/>
</dbReference>
<dbReference type="NCBIfam" id="NF002060">
    <property type="entry name" value="PRK00892.1"/>
    <property type="match status" value="1"/>
</dbReference>
<dbReference type="PANTHER" id="PTHR43378">
    <property type="entry name" value="UDP-3-O-ACYLGLUCOSAMINE N-ACYLTRANSFERASE"/>
    <property type="match status" value="1"/>
</dbReference>
<dbReference type="PANTHER" id="PTHR43378:SF2">
    <property type="entry name" value="UDP-3-O-ACYLGLUCOSAMINE N-ACYLTRANSFERASE 1, MITOCHONDRIAL-RELATED"/>
    <property type="match status" value="1"/>
</dbReference>
<dbReference type="Pfam" id="PF00132">
    <property type="entry name" value="Hexapep"/>
    <property type="match status" value="2"/>
</dbReference>
<dbReference type="Pfam" id="PF04613">
    <property type="entry name" value="LpxD"/>
    <property type="match status" value="1"/>
</dbReference>
<dbReference type="SUPFAM" id="SSF51161">
    <property type="entry name" value="Trimeric LpxA-like enzymes"/>
    <property type="match status" value="1"/>
</dbReference>
<sequence length="352" mass="37492">MTQIKLSTLQTLLPDATFQNSETLKDINFSGLTSLTLAGPSDISFVASKTFVNEAKASKASLLVVSQETAEALSDKAIIIVSKVELTTAKIIRLFFPEKQPSGKRSAQVAIDPSAKIGSNTDIGHFVTIGKDSIIGNDCIIEDGVKIGDRVQIGDGARIGKNCVFFDDTIVGKRFIAFGNSTFGGDGFGFVYAEGKHNKIPQVGRVVIGDDVEVGSNCTIDRGALTDTTIGNGCKFDNMVHVAHNCKVGDHVIIAGQSGLAGSVTLGNNVIIGGACAISDHLTLVDGTIIAGGSSLRTSPKTKDVYVGWDLGLTFPEFQKYRVNIKNIVNLNKWLKRIENIEKKVGIETKES</sequence>
<evidence type="ECO:0000255" key="1">
    <source>
        <dbReference type="HAMAP-Rule" id="MF_00523"/>
    </source>
</evidence>
<protein>
    <recommendedName>
        <fullName evidence="1">UDP-3-O-acylglucosamine N-acyltransferase</fullName>
        <ecNumber evidence="1">2.3.1.191</ecNumber>
    </recommendedName>
</protein>
<comment type="function">
    <text evidence="1">Catalyzes the N-acylation of UDP-3-O-acylglucosamine using 3-hydroxyacyl-ACP as the acyl donor. Is involved in the biosynthesis of lipid A, a phosphorylated glycolipid that anchors the lipopolysaccharide to the outer membrane of the cell.</text>
</comment>
<comment type="catalytic activity">
    <reaction evidence="1">
        <text>a UDP-3-O-[(3R)-3-hydroxyacyl]-alpha-D-glucosamine + a (3R)-hydroxyacyl-[ACP] = a UDP-2-N,3-O-bis[(3R)-3-hydroxyacyl]-alpha-D-glucosamine + holo-[ACP] + H(+)</text>
        <dbReference type="Rhea" id="RHEA:53836"/>
        <dbReference type="Rhea" id="RHEA-COMP:9685"/>
        <dbReference type="Rhea" id="RHEA-COMP:9945"/>
        <dbReference type="ChEBI" id="CHEBI:15378"/>
        <dbReference type="ChEBI" id="CHEBI:64479"/>
        <dbReference type="ChEBI" id="CHEBI:78827"/>
        <dbReference type="ChEBI" id="CHEBI:137740"/>
        <dbReference type="ChEBI" id="CHEBI:137748"/>
        <dbReference type="EC" id="2.3.1.191"/>
    </reaction>
</comment>
<comment type="pathway">
    <text evidence="1">Bacterial outer membrane biogenesis; LPS lipid A biosynthesis.</text>
</comment>
<comment type="subunit">
    <text evidence="1">Homotrimer.</text>
</comment>
<comment type="similarity">
    <text evidence="1">Belongs to the transferase hexapeptide repeat family. LpxD subfamily.</text>
</comment>
<accession>B0SCK5</accession>